<gene>
    <name evidence="1" type="primary">hfq</name>
    <name type="ordered locus">Shewmr7_3432</name>
</gene>
<evidence type="ECO:0000255" key="1">
    <source>
        <dbReference type="HAMAP-Rule" id="MF_00436"/>
    </source>
</evidence>
<evidence type="ECO:0000255" key="2">
    <source>
        <dbReference type="PROSITE-ProRule" id="PRU01346"/>
    </source>
</evidence>
<protein>
    <recommendedName>
        <fullName evidence="1">RNA-binding protein Hfq</fullName>
    </recommendedName>
</protein>
<reference key="1">
    <citation type="submission" date="2006-08" db="EMBL/GenBank/DDBJ databases">
        <title>Complete sequence of chromosome 1 of Shewanella sp. MR-7.</title>
        <authorList>
            <person name="Copeland A."/>
            <person name="Lucas S."/>
            <person name="Lapidus A."/>
            <person name="Barry K."/>
            <person name="Detter J.C."/>
            <person name="Glavina del Rio T."/>
            <person name="Hammon N."/>
            <person name="Israni S."/>
            <person name="Dalin E."/>
            <person name="Tice H."/>
            <person name="Pitluck S."/>
            <person name="Kiss H."/>
            <person name="Brettin T."/>
            <person name="Bruce D."/>
            <person name="Han C."/>
            <person name="Tapia R."/>
            <person name="Gilna P."/>
            <person name="Schmutz J."/>
            <person name="Larimer F."/>
            <person name="Land M."/>
            <person name="Hauser L."/>
            <person name="Kyrpides N."/>
            <person name="Mikhailova N."/>
            <person name="Nealson K."/>
            <person name="Konstantinidis K."/>
            <person name="Klappenbach J."/>
            <person name="Tiedje J."/>
            <person name="Richardson P."/>
        </authorList>
    </citation>
    <scope>NUCLEOTIDE SEQUENCE [LARGE SCALE GENOMIC DNA]</scope>
    <source>
        <strain>MR-7</strain>
    </source>
</reference>
<dbReference type="EMBL" id="CP000444">
    <property type="protein sequence ID" value="ABI44413.1"/>
    <property type="molecule type" value="Genomic_DNA"/>
</dbReference>
<dbReference type="SMR" id="Q0HR42"/>
<dbReference type="KEGG" id="shm:Shewmr7_3432"/>
<dbReference type="HOGENOM" id="CLU_113688_2_2_6"/>
<dbReference type="GO" id="GO:0005829">
    <property type="term" value="C:cytosol"/>
    <property type="evidence" value="ECO:0007669"/>
    <property type="project" value="TreeGrafter"/>
</dbReference>
<dbReference type="GO" id="GO:0003723">
    <property type="term" value="F:RNA binding"/>
    <property type="evidence" value="ECO:0007669"/>
    <property type="project" value="UniProtKB-UniRule"/>
</dbReference>
<dbReference type="GO" id="GO:0006355">
    <property type="term" value="P:regulation of DNA-templated transcription"/>
    <property type="evidence" value="ECO:0007669"/>
    <property type="project" value="InterPro"/>
</dbReference>
<dbReference type="GO" id="GO:0043487">
    <property type="term" value="P:regulation of RNA stability"/>
    <property type="evidence" value="ECO:0007669"/>
    <property type="project" value="TreeGrafter"/>
</dbReference>
<dbReference type="GO" id="GO:0045974">
    <property type="term" value="P:regulation of translation, ncRNA-mediated"/>
    <property type="evidence" value="ECO:0007669"/>
    <property type="project" value="TreeGrafter"/>
</dbReference>
<dbReference type="CDD" id="cd01716">
    <property type="entry name" value="Hfq"/>
    <property type="match status" value="1"/>
</dbReference>
<dbReference type="FunFam" id="2.30.30.100:FF:000001">
    <property type="entry name" value="RNA-binding protein Hfq"/>
    <property type="match status" value="1"/>
</dbReference>
<dbReference type="Gene3D" id="2.30.30.100">
    <property type="match status" value="1"/>
</dbReference>
<dbReference type="HAMAP" id="MF_00436">
    <property type="entry name" value="Hfq"/>
    <property type="match status" value="1"/>
</dbReference>
<dbReference type="InterPro" id="IPR005001">
    <property type="entry name" value="Hfq"/>
</dbReference>
<dbReference type="InterPro" id="IPR010920">
    <property type="entry name" value="LSM_dom_sf"/>
</dbReference>
<dbReference type="InterPro" id="IPR047575">
    <property type="entry name" value="Sm"/>
</dbReference>
<dbReference type="NCBIfam" id="TIGR02383">
    <property type="entry name" value="Hfq"/>
    <property type="match status" value="1"/>
</dbReference>
<dbReference type="NCBIfam" id="NF001602">
    <property type="entry name" value="PRK00395.1"/>
    <property type="match status" value="1"/>
</dbReference>
<dbReference type="PANTHER" id="PTHR34772">
    <property type="entry name" value="RNA-BINDING PROTEIN HFQ"/>
    <property type="match status" value="1"/>
</dbReference>
<dbReference type="PANTHER" id="PTHR34772:SF1">
    <property type="entry name" value="RNA-BINDING PROTEIN HFQ"/>
    <property type="match status" value="1"/>
</dbReference>
<dbReference type="Pfam" id="PF17209">
    <property type="entry name" value="Hfq"/>
    <property type="match status" value="1"/>
</dbReference>
<dbReference type="SUPFAM" id="SSF50182">
    <property type="entry name" value="Sm-like ribonucleoproteins"/>
    <property type="match status" value="1"/>
</dbReference>
<dbReference type="PROSITE" id="PS52002">
    <property type="entry name" value="SM"/>
    <property type="match status" value="1"/>
</dbReference>
<accession>Q0HR42</accession>
<name>HFQ_SHESR</name>
<feature type="chain" id="PRO_0000265190" description="RNA-binding protein Hfq">
    <location>
        <begin position="1"/>
        <end position="90"/>
    </location>
</feature>
<feature type="domain" description="Sm" evidence="2">
    <location>
        <begin position="9"/>
        <end position="68"/>
    </location>
</feature>
<proteinExistence type="inferred from homology"/>
<keyword id="KW-0694">RNA-binding</keyword>
<keyword id="KW-0346">Stress response</keyword>
<sequence length="90" mass="9873">MAKGQSLQDPFLNALRRERVPVSIYLVNGIKLQGQVESFDQFVILLKNTVSQMVYKHAISTVVPARPFNVAGHQNAQGGYGAQDDMPSGE</sequence>
<organism>
    <name type="scientific">Shewanella sp. (strain MR-7)</name>
    <dbReference type="NCBI Taxonomy" id="60481"/>
    <lineage>
        <taxon>Bacteria</taxon>
        <taxon>Pseudomonadati</taxon>
        <taxon>Pseudomonadota</taxon>
        <taxon>Gammaproteobacteria</taxon>
        <taxon>Alteromonadales</taxon>
        <taxon>Shewanellaceae</taxon>
        <taxon>Shewanella</taxon>
    </lineage>
</organism>
<comment type="function">
    <text evidence="1">RNA chaperone that binds small regulatory RNA (sRNAs) and mRNAs to facilitate mRNA translational regulation in response to envelope stress, environmental stress and changes in metabolite concentrations. Also binds with high specificity to tRNAs.</text>
</comment>
<comment type="subunit">
    <text evidence="1">Homohexamer.</text>
</comment>
<comment type="similarity">
    <text evidence="1">Belongs to the Hfq family.</text>
</comment>